<feature type="chain" id="PRO_0000427591" description="Uncharacterized protein MT0505">
    <location>
        <begin position="1"/>
        <end position="183"/>
    </location>
</feature>
<sequence length="183" mass="20717">MTSSLPTVQRVIQNALEVSQLKYSQHPRPGGAPPALIVELPGERKLKINTILSVGEHSVRVEAFVCRKPDENREDVYRFLLRRNRRLYGVAYTLDNVGDIYLVGQMALSAVDADEVDRVLGQVLEVVDSDFNALLELGFRSSIQREWQWRLSRGESLQNLQAFAHLRPTTMQSAQRDEKELGG</sequence>
<keyword id="KW-1185">Reference proteome</keyword>
<name>Y487_MYCTO</name>
<evidence type="ECO:0000305" key="1"/>
<organism>
    <name type="scientific">Mycobacterium tuberculosis (strain CDC 1551 / Oshkosh)</name>
    <dbReference type="NCBI Taxonomy" id="83331"/>
    <lineage>
        <taxon>Bacteria</taxon>
        <taxon>Bacillati</taxon>
        <taxon>Actinomycetota</taxon>
        <taxon>Actinomycetes</taxon>
        <taxon>Mycobacteriales</taxon>
        <taxon>Mycobacteriaceae</taxon>
        <taxon>Mycobacterium</taxon>
        <taxon>Mycobacterium tuberculosis complex</taxon>
    </lineage>
</organism>
<protein>
    <recommendedName>
        <fullName>Uncharacterized protein MT0505</fullName>
    </recommendedName>
</protein>
<proteinExistence type="predicted"/>
<dbReference type="EMBL" id="AE000516">
    <property type="protein sequence ID" value="AAK44728.1"/>
    <property type="molecule type" value="Genomic_DNA"/>
</dbReference>
<dbReference type="PIR" id="B70744">
    <property type="entry name" value="B70744"/>
</dbReference>
<dbReference type="RefSeq" id="WP_003402370.1">
    <property type="nucleotide sequence ID" value="NZ_KK341227.1"/>
</dbReference>
<dbReference type="SMR" id="P9WKU8"/>
<dbReference type="KEGG" id="mtc:MT0505"/>
<dbReference type="PATRIC" id="fig|83331.31.peg.535"/>
<dbReference type="HOGENOM" id="CLU_111492_0_0_11"/>
<dbReference type="Proteomes" id="UP000001020">
    <property type="component" value="Chromosome"/>
</dbReference>
<dbReference type="Gene3D" id="3.30.1460.10">
    <property type="match status" value="1"/>
</dbReference>
<dbReference type="InterPro" id="IPR019660">
    <property type="entry name" value="Put_sensory_transdc_reg_YbjN"/>
</dbReference>
<dbReference type="Pfam" id="PF10722">
    <property type="entry name" value="YbjN"/>
    <property type="match status" value="1"/>
</dbReference>
<dbReference type="SUPFAM" id="SSF69635">
    <property type="entry name" value="Type III secretory system chaperone-like"/>
    <property type="match status" value="1"/>
</dbReference>
<accession>P9WKU8</accession>
<accession>L0T3W6</accession>
<accession>P64709</accession>
<accession>Q11153</accession>
<reference key="1">
    <citation type="journal article" date="2002" name="J. Bacteriol.">
        <title>Whole-genome comparison of Mycobacterium tuberculosis clinical and laboratory strains.</title>
        <authorList>
            <person name="Fleischmann R.D."/>
            <person name="Alland D."/>
            <person name="Eisen J.A."/>
            <person name="Carpenter L."/>
            <person name="White O."/>
            <person name="Peterson J.D."/>
            <person name="DeBoy R.T."/>
            <person name="Dodson R.J."/>
            <person name="Gwinn M.L."/>
            <person name="Haft D.H."/>
            <person name="Hickey E.K."/>
            <person name="Kolonay J.F."/>
            <person name="Nelson W.C."/>
            <person name="Umayam L.A."/>
            <person name="Ermolaeva M.D."/>
            <person name="Salzberg S.L."/>
            <person name="Delcher A."/>
            <person name="Utterback T.R."/>
            <person name="Weidman J.F."/>
            <person name="Khouri H.M."/>
            <person name="Gill J."/>
            <person name="Mikula A."/>
            <person name="Bishai W."/>
            <person name="Jacobs W.R. Jr."/>
            <person name="Venter J.C."/>
            <person name="Fraser C.M."/>
        </authorList>
    </citation>
    <scope>NUCLEOTIDE SEQUENCE [LARGE SCALE GENOMIC DNA]</scope>
    <source>
        <strain>CDC 1551 / Oshkosh</strain>
    </source>
</reference>
<comment type="similarity">
    <text evidence="1">To M.leprae ML2442.</text>
</comment>
<gene>
    <name type="ordered locus">MT0505</name>
</gene>